<evidence type="ECO:0000255" key="1">
    <source>
        <dbReference type="PROSITE-ProRule" id="PRU00160"/>
    </source>
</evidence>
<evidence type="ECO:0000269" key="2">
    <source>
    </source>
</evidence>
<evidence type="ECO:0000269" key="3">
    <source>
    </source>
</evidence>
<evidence type="ECO:0000269" key="4">
    <source>
    </source>
</evidence>
<evidence type="ECO:0000303" key="5">
    <source ref="5"/>
</evidence>
<evidence type="ECO:0000305" key="6"/>
<dbReference type="EC" id="3.1.3.16"/>
<dbReference type="EC" id="3.1.3.48"/>
<dbReference type="EMBL" id="AC018907">
    <property type="protein sequence ID" value="AAF30304.1"/>
    <property type="molecule type" value="Genomic_DNA"/>
</dbReference>
<dbReference type="EMBL" id="CP002686">
    <property type="protein sequence ID" value="AEE74344.1"/>
    <property type="molecule type" value="Genomic_DNA"/>
</dbReference>
<dbReference type="EMBL" id="CP002686">
    <property type="protein sequence ID" value="AEE74345.1"/>
    <property type="molecule type" value="Genomic_DNA"/>
</dbReference>
<dbReference type="EMBL" id="CP002686">
    <property type="protein sequence ID" value="AEE74346.1"/>
    <property type="molecule type" value="Genomic_DNA"/>
</dbReference>
<dbReference type="EMBL" id="AK117443">
    <property type="protein sequence ID" value="BAC42108.1"/>
    <property type="molecule type" value="mRNA"/>
</dbReference>
<dbReference type="EMBL" id="BT005135">
    <property type="protein sequence ID" value="AAO50668.1"/>
    <property type="molecule type" value="mRNA"/>
</dbReference>
<dbReference type="EMBL" id="AY085765">
    <property type="protein sequence ID" value="AAM62982.1"/>
    <property type="molecule type" value="mRNA"/>
</dbReference>
<dbReference type="RefSeq" id="NP_001189821.1">
    <molecule id="Q9M8K7-1"/>
    <property type="nucleotide sequence ID" value="NM_001202892.1"/>
</dbReference>
<dbReference type="RefSeq" id="NP_566272.1">
    <molecule id="Q9M8K7-2"/>
    <property type="nucleotide sequence ID" value="NM_111486.3"/>
</dbReference>
<dbReference type="RefSeq" id="NP_850522.1">
    <molecule id="Q9M8K7-1"/>
    <property type="nucleotide sequence ID" value="NM_180191.3"/>
</dbReference>
<dbReference type="SMR" id="Q9M8K7"/>
<dbReference type="BioGRID" id="5119">
    <property type="interactions" value="2"/>
</dbReference>
<dbReference type="FunCoup" id="Q9M8K7">
    <property type="interactions" value="2416"/>
</dbReference>
<dbReference type="STRING" id="3702.Q9M8K7"/>
<dbReference type="iPTMnet" id="Q9M8K7"/>
<dbReference type="PaxDb" id="3702-AT3G06110.3"/>
<dbReference type="ProteomicsDB" id="221935">
    <molecule id="Q9M8K7-1"/>
</dbReference>
<dbReference type="EnsemblPlants" id="AT3G06110.1">
    <molecule id="Q9M8K7-2"/>
    <property type="protein sequence ID" value="AT3G06110.1"/>
    <property type="gene ID" value="AT3G06110"/>
</dbReference>
<dbReference type="EnsemblPlants" id="AT3G06110.2">
    <molecule id="Q9M8K7-1"/>
    <property type="protein sequence ID" value="AT3G06110.2"/>
    <property type="gene ID" value="AT3G06110"/>
</dbReference>
<dbReference type="EnsemblPlants" id="AT3G06110.3">
    <molecule id="Q9M8K7-1"/>
    <property type="protein sequence ID" value="AT3G06110.3"/>
    <property type="gene ID" value="AT3G06110"/>
</dbReference>
<dbReference type="GeneID" id="819784"/>
<dbReference type="Gramene" id="AT3G06110.1">
    <molecule id="Q9M8K7-2"/>
    <property type="protein sequence ID" value="AT3G06110.1"/>
    <property type="gene ID" value="AT3G06110"/>
</dbReference>
<dbReference type="Gramene" id="AT3G06110.2">
    <molecule id="Q9M8K7-1"/>
    <property type="protein sequence ID" value="AT3G06110.2"/>
    <property type="gene ID" value="AT3G06110"/>
</dbReference>
<dbReference type="Gramene" id="AT3G06110.3">
    <molecule id="Q9M8K7-1"/>
    <property type="protein sequence ID" value="AT3G06110.3"/>
    <property type="gene ID" value="AT3G06110"/>
</dbReference>
<dbReference type="KEGG" id="ath:AT3G06110"/>
<dbReference type="Araport" id="AT3G06110"/>
<dbReference type="TAIR" id="AT3G06110">
    <property type="gene designation" value="MKP2"/>
</dbReference>
<dbReference type="eggNOG" id="KOG1716">
    <property type="taxonomic scope" value="Eukaryota"/>
</dbReference>
<dbReference type="InParanoid" id="Q9M8K7"/>
<dbReference type="OMA" id="AHDLEIM"/>
<dbReference type="OrthoDB" id="10252009at2759"/>
<dbReference type="PhylomeDB" id="Q9M8K7"/>
<dbReference type="PRO" id="PR:Q9M8K7"/>
<dbReference type="Proteomes" id="UP000006548">
    <property type="component" value="Chromosome 3"/>
</dbReference>
<dbReference type="ExpressionAtlas" id="Q9M8K7">
    <property type="expression patterns" value="baseline and differential"/>
</dbReference>
<dbReference type="GO" id="GO:0005737">
    <property type="term" value="C:cytoplasm"/>
    <property type="evidence" value="ECO:0000314"/>
    <property type="project" value="UniProtKB"/>
</dbReference>
<dbReference type="GO" id="GO:0005634">
    <property type="term" value="C:nucleus"/>
    <property type="evidence" value="ECO:0000314"/>
    <property type="project" value="TAIR"/>
</dbReference>
<dbReference type="GO" id="GO:0005886">
    <property type="term" value="C:plasma membrane"/>
    <property type="evidence" value="ECO:0007005"/>
    <property type="project" value="TAIR"/>
</dbReference>
<dbReference type="GO" id="GO:0033549">
    <property type="term" value="F:MAP kinase phosphatase activity"/>
    <property type="evidence" value="ECO:0000314"/>
    <property type="project" value="TAIR"/>
</dbReference>
<dbReference type="GO" id="GO:0004722">
    <property type="term" value="F:protein serine/threonine phosphatase activity"/>
    <property type="evidence" value="ECO:0007669"/>
    <property type="project" value="UniProtKB-EC"/>
</dbReference>
<dbReference type="GO" id="GO:0004725">
    <property type="term" value="F:protein tyrosine phosphatase activity"/>
    <property type="evidence" value="ECO:0007669"/>
    <property type="project" value="UniProtKB-EC"/>
</dbReference>
<dbReference type="GO" id="GO:0034599">
    <property type="term" value="P:cellular response to oxidative stress"/>
    <property type="evidence" value="ECO:0000315"/>
    <property type="project" value="UniProtKB"/>
</dbReference>
<dbReference type="GO" id="GO:0035556">
    <property type="term" value="P:intracellular signal transduction"/>
    <property type="evidence" value="ECO:0000305"/>
    <property type="project" value="TAIR"/>
</dbReference>
<dbReference type="GO" id="GO:0043407">
    <property type="term" value="P:negative regulation of MAP kinase activity"/>
    <property type="evidence" value="ECO:0000315"/>
    <property type="project" value="TAIR"/>
</dbReference>
<dbReference type="GO" id="GO:0034051">
    <property type="term" value="P:negative regulation of plant-type hypersensitive response"/>
    <property type="evidence" value="ECO:0000315"/>
    <property type="project" value="UniProtKB"/>
</dbReference>
<dbReference type="GO" id="GO:0006979">
    <property type="term" value="P:response to oxidative stress"/>
    <property type="evidence" value="ECO:0000315"/>
    <property type="project" value="TAIR"/>
</dbReference>
<dbReference type="GO" id="GO:0010193">
    <property type="term" value="P:response to ozone"/>
    <property type="evidence" value="ECO:0000315"/>
    <property type="project" value="TAIR"/>
</dbReference>
<dbReference type="CDD" id="cd14498">
    <property type="entry name" value="DSP"/>
    <property type="match status" value="1"/>
</dbReference>
<dbReference type="FunFam" id="3.90.190.10:FF:000056">
    <property type="entry name" value="Dual specificity phosphatase 12"/>
    <property type="match status" value="1"/>
</dbReference>
<dbReference type="Gene3D" id="3.90.190.10">
    <property type="entry name" value="Protein tyrosine phosphatase superfamily"/>
    <property type="match status" value="1"/>
</dbReference>
<dbReference type="InterPro" id="IPR000340">
    <property type="entry name" value="Dual-sp_phosphatase_cat-dom"/>
</dbReference>
<dbReference type="InterPro" id="IPR029021">
    <property type="entry name" value="Prot-tyrosine_phosphatase-like"/>
</dbReference>
<dbReference type="InterPro" id="IPR000387">
    <property type="entry name" value="Tyr_Pase_dom"/>
</dbReference>
<dbReference type="InterPro" id="IPR020422">
    <property type="entry name" value="TYR_PHOSPHATASE_DUAL_dom"/>
</dbReference>
<dbReference type="PANTHER" id="PTHR10159">
    <property type="entry name" value="DUAL SPECIFICITY PROTEIN PHOSPHATASE"/>
    <property type="match status" value="1"/>
</dbReference>
<dbReference type="PANTHER" id="PTHR10159:SF503">
    <property type="entry name" value="DUAL SPECIFICITY PROTEIN PHOSPHATASE 1B"/>
    <property type="match status" value="1"/>
</dbReference>
<dbReference type="Pfam" id="PF00782">
    <property type="entry name" value="DSPc"/>
    <property type="match status" value="1"/>
</dbReference>
<dbReference type="SMART" id="SM00195">
    <property type="entry name" value="DSPc"/>
    <property type="match status" value="1"/>
</dbReference>
<dbReference type="SUPFAM" id="SSF52799">
    <property type="entry name" value="(Phosphotyrosine protein) phosphatases II"/>
    <property type="match status" value="1"/>
</dbReference>
<dbReference type="PROSITE" id="PS50056">
    <property type="entry name" value="TYR_PHOSPHATASE_2"/>
    <property type="match status" value="1"/>
</dbReference>
<dbReference type="PROSITE" id="PS50054">
    <property type="entry name" value="TYR_PHOSPHATASE_DUAL"/>
    <property type="match status" value="1"/>
</dbReference>
<feature type="chain" id="PRO_0000415897" description="Dual specificity protein phosphatase 1B">
    <location>
        <begin position="1"/>
        <end position="167"/>
    </location>
</feature>
<feature type="domain" description="Tyrosine-protein phosphatase" evidence="1">
    <location>
        <begin position="24"/>
        <end position="165"/>
    </location>
</feature>
<feature type="active site" description="Phosphocysteine intermediate" evidence="1">
    <location>
        <position position="109"/>
    </location>
</feature>
<feature type="splice variant" id="VSP_042414" description="In isoform 2." evidence="5">
    <location>
        <begin position="77"/>
        <end position="86"/>
    </location>
</feature>
<feature type="mutagenesis site" description="Loss of phosphatase activity." evidence="2 4">
    <original>C</original>
    <variation>S</variation>
    <location>
        <position position="109"/>
    </location>
</feature>
<name>DUS1B_ARATH</name>
<reference key="1">
    <citation type="journal article" date="2000" name="Nature">
        <title>Sequence and analysis of chromosome 3 of the plant Arabidopsis thaliana.</title>
        <authorList>
            <person name="Salanoubat M."/>
            <person name="Lemcke K."/>
            <person name="Rieger M."/>
            <person name="Ansorge W."/>
            <person name="Unseld M."/>
            <person name="Fartmann B."/>
            <person name="Valle G."/>
            <person name="Bloecker H."/>
            <person name="Perez-Alonso M."/>
            <person name="Obermaier B."/>
            <person name="Delseny M."/>
            <person name="Boutry M."/>
            <person name="Grivell L.A."/>
            <person name="Mache R."/>
            <person name="Puigdomenech P."/>
            <person name="De Simone V."/>
            <person name="Choisne N."/>
            <person name="Artiguenave F."/>
            <person name="Robert C."/>
            <person name="Brottier P."/>
            <person name="Wincker P."/>
            <person name="Cattolico L."/>
            <person name="Weissenbach J."/>
            <person name="Saurin W."/>
            <person name="Quetier F."/>
            <person name="Schaefer M."/>
            <person name="Mueller-Auer S."/>
            <person name="Gabel C."/>
            <person name="Fuchs M."/>
            <person name="Benes V."/>
            <person name="Wurmbach E."/>
            <person name="Drzonek H."/>
            <person name="Erfle H."/>
            <person name="Jordan N."/>
            <person name="Bangert S."/>
            <person name="Wiedelmann R."/>
            <person name="Kranz H."/>
            <person name="Voss H."/>
            <person name="Holland R."/>
            <person name="Brandt P."/>
            <person name="Nyakatura G."/>
            <person name="Vezzi A."/>
            <person name="D'Angelo M."/>
            <person name="Pallavicini A."/>
            <person name="Toppo S."/>
            <person name="Simionati B."/>
            <person name="Conrad A."/>
            <person name="Hornischer K."/>
            <person name="Kauer G."/>
            <person name="Loehnert T.-H."/>
            <person name="Nordsiek G."/>
            <person name="Reichelt J."/>
            <person name="Scharfe M."/>
            <person name="Schoen O."/>
            <person name="Bargues M."/>
            <person name="Terol J."/>
            <person name="Climent J."/>
            <person name="Navarro P."/>
            <person name="Collado C."/>
            <person name="Perez-Perez A."/>
            <person name="Ottenwaelder B."/>
            <person name="Duchemin D."/>
            <person name="Cooke R."/>
            <person name="Laudie M."/>
            <person name="Berger-Llauro C."/>
            <person name="Purnelle B."/>
            <person name="Masuy D."/>
            <person name="de Haan M."/>
            <person name="Maarse A.C."/>
            <person name="Alcaraz J.-P."/>
            <person name="Cottet A."/>
            <person name="Casacuberta E."/>
            <person name="Monfort A."/>
            <person name="Argiriou A."/>
            <person name="Flores M."/>
            <person name="Liguori R."/>
            <person name="Vitale D."/>
            <person name="Mannhaupt G."/>
            <person name="Haase D."/>
            <person name="Schoof H."/>
            <person name="Rudd S."/>
            <person name="Zaccaria P."/>
            <person name="Mewes H.-W."/>
            <person name="Mayer K.F.X."/>
            <person name="Kaul S."/>
            <person name="Town C.D."/>
            <person name="Koo H.L."/>
            <person name="Tallon L.J."/>
            <person name="Jenkins J."/>
            <person name="Rooney T."/>
            <person name="Rizzo M."/>
            <person name="Walts A."/>
            <person name="Utterback T."/>
            <person name="Fujii C.Y."/>
            <person name="Shea T.P."/>
            <person name="Creasy T.H."/>
            <person name="Haas B."/>
            <person name="Maiti R."/>
            <person name="Wu D."/>
            <person name="Peterson J."/>
            <person name="Van Aken S."/>
            <person name="Pai G."/>
            <person name="Militscher J."/>
            <person name="Sellers P."/>
            <person name="Gill J.E."/>
            <person name="Feldblyum T.V."/>
            <person name="Preuss D."/>
            <person name="Lin X."/>
            <person name="Nierman W.C."/>
            <person name="Salzberg S.L."/>
            <person name="White O."/>
            <person name="Venter J.C."/>
            <person name="Fraser C.M."/>
            <person name="Kaneko T."/>
            <person name="Nakamura Y."/>
            <person name="Sato S."/>
            <person name="Kato T."/>
            <person name="Asamizu E."/>
            <person name="Sasamoto S."/>
            <person name="Kimura T."/>
            <person name="Idesawa K."/>
            <person name="Kawashima K."/>
            <person name="Kishida Y."/>
            <person name="Kiyokawa C."/>
            <person name="Kohara M."/>
            <person name="Matsumoto M."/>
            <person name="Matsuno A."/>
            <person name="Muraki A."/>
            <person name="Nakayama S."/>
            <person name="Nakazaki N."/>
            <person name="Shinpo S."/>
            <person name="Takeuchi C."/>
            <person name="Wada T."/>
            <person name="Watanabe A."/>
            <person name="Yamada M."/>
            <person name="Yasuda M."/>
            <person name="Tabata S."/>
        </authorList>
    </citation>
    <scope>NUCLEOTIDE SEQUENCE [LARGE SCALE GENOMIC DNA]</scope>
    <source>
        <strain>cv. Columbia</strain>
    </source>
</reference>
<reference key="2">
    <citation type="journal article" date="2017" name="Plant J.">
        <title>Araport11: a complete reannotation of the Arabidopsis thaliana reference genome.</title>
        <authorList>
            <person name="Cheng C.Y."/>
            <person name="Krishnakumar V."/>
            <person name="Chan A.P."/>
            <person name="Thibaud-Nissen F."/>
            <person name="Schobel S."/>
            <person name="Town C.D."/>
        </authorList>
    </citation>
    <scope>GENOME REANNOTATION</scope>
    <source>
        <strain>cv. Columbia</strain>
    </source>
</reference>
<reference key="3">
    <citation type="journal article" date="2002" name="Science">
        <title>Functional annotation of a full-length Arabidopsis cDNA collection.</title>
        <authorList>
            <person name="Seki M."/>
            <person name="Narusaka M."/>
            <person name="Kamiya A."/>
            <person name="Ishida J."/>
            <person name="Satou M."/>
            <person name="Sakurai T."/>
            <person name="Nakajima M."/>
            <person name="Enju A."/>
            <person name="Akiyama K."/>
            <person name="Oono Y."/>
            <person name="Muramatsu M."/>
            <person name="Hayashizaki Y."/>
            <person name="Kawai J."/>
            <person name="Carninci P."/>
            <person name="Itoh M."/>
            <person name="Ishii Y."/>
            <person name="Arakawa T."/>
            <person name="Shibata K."/>
            <person name="Shinagawa A."/>
            <person name="Shinozaki K."/>
        </authorList>
    </citation>
    <scope>NUCLEOTIDE SEQUENCE [LARGE SCALE MRNA] (ISOFORM 1)</scope>
    <source>
        <strain>cv. Columbia</strain>
    </source>
</reference>
<reference key="4">
    <citation type="journal article" date="2003" name="Science">
        <title>Empirical analysis of transcriptional activity in the Arabidopsis genome.</title>
        <authorList>
            <person name="Yamada K."/>
            <person name="Lim J."/>
            <person name="Dale J.M."/>
            <person name="Chen H."/>
            <person name="Shinn P."/>
            <person name="Palm C.J."/>
            <person name="Southwick A.M."/>
            <person name="Wu H.C."/>
            <person name="Kim C.J."/>
            <person name="Nguyen M."/>
            <person name="Pham P.K."/>
            <person name="Cheuk R.F."/>
            <person name="Karlin-Newmann G."/>
            <person name="Liu S.X."/>
            <person name="Lam B."/>
            <person name="Sakano H."/>
            <person name="Wu T."/>
            <person name="Yu G."/>
            <person name="Miranda M."/>
            <person name="Quach H.L."/>
            <person name="Tripp M."/>
            <person name="Chang C.H."/>
            <person name="Lee J.M."/>
            <person name="Toriumi M.J."/>
            <person name="Chan M.M."/>
            <person name="Tang C.C."/>
            <person name="Onodera C.S."/>
            <person name="Deng J.M."/>
            <person name="Akiyama K."/>
            <person name="Ansari Y."/>
            <person name="Arakawa T."/>
            <person name="Banh J."/>
            <person name="Banno F."/>
            <person name="Bowser L."/>
            <person name="Brooks S.Y."/>
            <person name="Carninci P."/>
            <person name="Chao Q."/>
            <person name="Choy N."/>
            <person name="Enju A."/>
            <person name="Goldsmith A.D."/>
            <person name="Gurjal M."/>
            <person name="Hansen N.F."/>
            <person name="Hayashizaki Y."/>
            <person name="Johnson-Hopson C."/>
            <person name="Hsuan V.W."/>
            <person name="Iida K."/>
            <person name="Karnes M."/>
            <person name="Khan S."/>
            <person name="Koesema E."/>
            <person name="Ishida J."/>
            <person name="Jiang P.X."/>
            <person name="Jones T."/>
            <person name="Kawai J."/>
            <person name="Kamiya A."/>
            <person name="Meyers C."/>
            <person name="Nakajima M."/>
            <person name="Narusaka M."/>
            <person name="Seki M."/>
            <person name="Sakurai T."/>
            <person name="Satou M."/>
            <person name="Tamse R."/>
            <person name="Vaysberg M."/>
            <person name="Wallender E.K."/>
            <person name="Wong C."/>
            <person name="Yamamura Y."/>
            <person name="Yuan S."/>
            <person name="Shinozaki K."/>
            <person name="Davis R.W."/>
            <person name="Theologis A."/>
            <person name="Ecker J.R."/>
        </authorList>
    </citation>
    <scope>NUCLEOTIDE SEQUENCE [LARGE SCALE MRNA] (ISOFORM 1)</scope>
    <source>
        <strain>cv. Columbia</strain>
    </source>
</reference>
<reference key="5">
    <citation type="submission" date="2002-03" db="EMBL/GenBank/DDBJ databases">
        <title>Full-length cDNA from Arabidopsis thaliana.</title>
        <authorList>
            <person name="Brover V.V."/>
            <person name="Troukhan M.E."/>
            <person name="Alexandrov N.A."/>
            <person name="Lu Y.-P."/>
            <person name="Flavell R.B."/>
            <person name="Feldmann K.A."/>
        </authorList>
    </citation>
    <scope>NUCLEOTIDE SEQUENCE [LARGE SCALE MRNA] (ISOFORM 2)</scope>
</reference>
<reference key="6">
    <citation type="journal article" date="2007" name="J. Biol. Chem.">
        <title>Arabidopsis MAPK phosphatase 2 (MKP2) positively regulates oxidative stress tolerance and inactivates the MPK3 and MPK6 MAPKs.</title>
        <authorList>
            <person name="Lee J.S."/>
            <person name="Ellis B.E."/>
        </authorList>
    </citation>
    <scope>FUNCTION AS PHOSPHATASE</scope>
    <scope>SUBCELLULAR LOCATION</scope>
    <scope>MUTAGENESIS OF CYS-109</scope>
    <source>
        <strain>cv. Columbia</strain>
    </source>
</reference>
<reference key="7">
    <citation type="journal article" date="2010" name="Plant J.">
        <title>MAPK phosphatase MKP2 mediates disease responses in Arabidopsis and functionally interacts with MPK3 and MPK6.</title>
        <authorList>
            <person name="Lumbreras V."/>
            <person name="Vilela B."/>
            <person name="Irar S."/>
            <person name="Sole M."/>
            <person name="Capellades M."/>
            <person name="Valls M."/>
            <person name="Coca M."/>
            <person name="Pages M."/>
        </authorList>
    </citation>
    <scope>FUNCTION IN DEFENSE RESPONSE</scope>
    <scope>INTERACTION WITH MPK3 AND MPK6</scope>
    <scope>SUBCELLULAR LOCATION</scope>
    <scope>TISSUE SPECIFICITY</scope>
    <scope>DEVELOPMENTAL STAGE</scope>
    <scope>DISRUPTION PHENOTYPE</scope>
    <source>
        <strain>cv. Columbia</strain>
    </source>
</reference>
<reference key="8">
    <citation type="journal article" date="2010" name="Plant Signal. Behav.">
        <title>Regulation of MAPK signaling and cell death by MAPK phosphatase MKP2.</title>
        <authorList>
            <person name="Vilela B."/>
            <person name="Pages M."/>
            <person name="Lumbreras V."/>
        </authorList>
    </citation>
    <scope>FUNCTION</scope>
    <scope>INTERACTION WITH MPK6</scope>
    <scope>MUTAGENESIS OF CYS-109</scope>
    <scope>INDUCTION BY STRESS CONDITIONS</scope>
</reference>
<protein>
    <recommendedName>
        <fullName>Dual specificity protein phosphatase 1B</fullName>
        <shortName>AtDsPTP1B</shortName>
        <ecNumber>3.1.3.16</ecNumber>
        <ecNumber>3.1.3.48</ecNumber>
    </recommendedName>
    <alternativeName>
        <fullName>MAPK phosphatase 2</fullName>
        <shortName>AtMKP2</shortName>
    </alternativeName>
</protein>
<organism>
    <name type="scientific">Arabidopsis thaliana</name>
    <name type="common">Mouse-ear cress</name>
    <dbReference type="NCBI Taxonomy" id="3702"/>
    <lineage>
        <taxon>Eukaryota</taxon>
        <taxon>Viridiplantae</taxon>
        <taxon>Streptophyta</taxon>
        <taxon>Embryophyta</taxon>
        <taxon>Tracheophyta</taxon>
        <taxon>Spermatophyta</taxon>
        <taxon>Magnoliopsida</taxon>
        <taxon>eudicotyledons</taxon>
        <taxon>Gunneridae</taxon>
        <taxon>Pentapetalae</taxon>
        <taxon>rosids</taxon>
        <taxon>malvids</taxon>
        <taxon>Brassicales</taxon>
        <taxon>Brassicaceae</taxon>
        <taxon>Camelineae</taxon>
        <taxon>Arabidopsis</taxon>
    </lineage>
</organism>
<proteinExistence type="evidence at protein level"/>
<comment type="function">
    <text evidence="2 3 4">Has a dual specificity toward Ser/Thr and Tyr-containing proteins. Prevents biotic and abiotic stress responses, including ozone, oxidative stress and pathogen attacks; represses MAPK activities during hypersensitive response to limit the spread of the HR response after infection by necrotrophic pathogen such as Botrytis cinerea. May be also involved in ABA and salt responses. Dephosphorylates MPK3 and MPK6.</text>
</comment>
<comment type="catalytic activity">
    <reaction>
        <text>O-phospho-L-tyrosyl-[protein] + H2O = L-tyrosyl-[protein] + phosphate</text>
        <dbReference type="Rhea" id="RHEA:10684"/>
        <dbReference type="Rhea" id="RHEA-COMP:10136"/>
        <dbReference type="Rhea" id="RHEA-COMP:20101"/>
        <dbReference type="ChEBI" id="CHEBI:15377"/>
        <dbReference type="ChEBI" id="CHEBI:43474"/>
        <dbReference type="ChEBI" id="CHEBI:46858"/>
        <dbReference type="ChEBI" id="CHEBI:61978"/>
        <dbReference type="EC" id="3.1.3.48"/>
    </reaction>
</comment>
<comment type="catalytic activity">
    <reaction>
        <text>O-phospho-L-seryl-[protein] + H2O = L-seryl-[protein] + phosphate</text>
        <dbReference type="Rhea" id="RHEA:20629"/>
        <dbReference type="Rhea" id="RHEA-COMP:9863"/>
        <dbReference type="Rhea" id="RHEA-COMP:11604"/>
        <dbReference type="ChEBI" id="CHEBI:15377"/>
        <dbReference type="ChEBI" id="CHEBI:29999"/>
        <dbReference type="ChEBI" id="CHEBI:43474"/>
        <dbReference type="ChEBI" id="CHEBI:83421"/>
        <dbReference type="EC" id="3.1.3.16"/>
    </reaction>
</comment>
<comment type="catalytic activity">
    <reaction>
        <text>O-phospho-L-threonyl-[protein] + H2O = L-threonyl-[protein] + phosphate</text>
        <dbReference type="Rhea" id="RHEA:47004"/>
        <dbReference type="Rhea" id="RHEA-COMP:11060"/>
        <dbReference type="Rhea" id="RHEA-COMP:11605"/>
        <dbReference type="ChEBI" id="CHEBI:15377"/>
        <dbReference type="ChEBI" id="CHEBI:30013"/>
        <dbReference type="ChEBI" id="CHEBI:43474"/>
        <dbReference type="ChEBI" id="CHEBI:61977"/>
        <dbReference type="EC" id="3.1.3.16"/>
    </reaction>
</comment>
<comment type="subunit">
    <text evidence="3 4">Associates with MPK3 and MPK6. Interacts with MPK6 is promoted during HR-like responses triggered by fungal elicitors, whereas interaction with MPK3 in repressed.</text>
</comment>
<comment type="subcellular location">
    <subcellularLocation>
        <location>Nucleus</location>
    </subcellularLocation>
    <subcellularLocation>
        <location>Cytoplasm</location>
    </subcellularLocation>
    <text>Upon fungal elicitation, relocalizes surrounding spherical structures that could correspond to epiplasts.</text>
</comment>
<comment type="alternative products">
    <event type="alternative splicing"/>
    <isoform>
        <id>Q9M8K7-1</id>
        <name>1</name>
        <sequence type="displayed"/>
    </isoform>
    <isoform>
        <id>Q9M8K7-2</id>
        <name>2</name>
        <sequence type="described" ref="VSP_042414"/>
    </isoform>
</comment>
<comment type="tissue specificity">
    <text evidence="3">Expressed in flowers, seedlings, roots, leaves, and seeds. Present in stomata and meristematic cells.</text>
</comment>
<comment type="developmental stage">
    <text evidence="3">In flowers, expressed in stigmatic papillae, anthers, pollen grains and floral abscission zones. As flowers mature, progressively restricted to the abscission zones and the septum of the siliques. During seed development Mainly detected in seeds endosperm layer until the fourth day after germination. In young seedlings, confined to the cotyledons. Later observed in roots, especially in vascular organs and at branching points of lateral roots. In adult leaves, particularly localized in vascular tissues and hydathodes; mostly present in both young and senescent leaves, tissues undergoing developmental transitions.</text>
</comment>
<comment type="induction">
    <text evidence="4">Accumulates in response to stress conditions caused by abscisic acid (ABA) or salt treatment.</text>
</comment>
<comment type="disruption phenotype">
    <text evidence="3">Delayed wilting symptoms in response to Ralstonia solanacearum and, by contrast, acceleration of disease progression during Botrytis cinerea infection, suggesting that this phosphatase plays differential functions in biotrophic versus necrotrophic pathogen-induced responses. Prolonged MPK3 and MPK6 activation during ozone treatment.</text>
</comment>
<comment type="similarity">
    <text evidence="6">Belongs to the protein-tyrosine phosphatase family. Non-receptor class dual specificity subfamily.</text>
</comment>
<keyword id="KW-0025">Alternative splicing</keyword>
<keyword id="KW-0963">Cytoplasm</keyword>
<keyword id="KW-0378">Hydrolase</keyword>
<keyword id="KW-0928">Hypersensitive response elicitation</keyword>
<keyword id="KW-0539">Nucleus</keyword>
<keyword id="KW-0904">Protein phosphatase</keyword>
<keyword id="KW-1185">Reference proteome</keyword>
<gene>
    <name type="primary">DSPTP1B</name>
    <name type="synonym">MKP2</name>
    <name type="ordered locus">At3g06110</name>
    <name type="ORF">F28L1.5</name>
</gene>
<sequence length="167" mass="18431">MEKVVDLFGVGEANSQKLLEGGKDLSEIQQGLFIGSVAEANNKDFLKSSNITHVLTVAVALAPPYPDDFVYKVIEVVDRSETDLTVYFDECYSFIDQAIQSGGGVLVHCFMGMSRSVTIVVAYLMKKHGMGFSKAMELVRSRRHQAYPNPGFISQLQQFEKSIQGNA</sequence>
<accession>Q9M8K7</accession>
<accession>Q8LDW2</accession>